<comment type="function">
    <text evidence="1">Involved in unsaturated fatty acids biosynthesis. Catalyzes the dehydration of short chain beta-hydroxyacyl-ACPs and long chain saturated and unsaturated beta-hydroxyacyl-ACPs.</text>
</comment>
<comment type="catalytic activity">
    <reaction evidence="1">
        <text>a (3R)-hydroxyacyl-[ACP] = a (2E)-enoyl-[ACP] + H2O</text>
        <dbReference type="Rhea" id="RHEA:13097"/>
        <dbReference type="Rhea" id="RHEA-COMP:9925"/>
        <dbReference type="Rhea" id="RHEA-COMP:9945"/>
        <dbReference type="ChEBI" id="CHEBI:15377"/>
        <dbReference type="ChEBI" id="CHEBI:78784"/>
        <dbReference type="ChEBI" id="CHEBI:78827"/>
        <dbReference type="EC" id="4.2.1.59"/>
    </reaction>
</comment>
<comment type="subcellular location">
    <subcellularLocation>
        <location evidence="1">Cytoplasm</location>
    </subcellularLocation>
</comment>
<comment type="similarity">
    <text evidence="1">Belongs to the thioester dehydratase family. FabZ subfamily.</text>
</comment>
<protein>
    <recommendedName>
        <fullName evidence="1">3-hydroxyacyl-[acyl-carrier-protein] dehydratase FabZ</fullName>
        <ecNumber evidence="1">4.2.1.59</ecNumber>
    </recommendedName>
    <alternativeName>
        <fullName evidence="1">(3R)-hydroxymyristoyl-[acyl-carrier-protein] dehydratase</fullName>
        <shortName evidence="1">(3R)-hydroxymyristoyl-ACP dehydrase</shortName>
    </alternativeName>
    <alternativeName>
        <fullName evidence="1">Beta-hydroxyacyl-ACP dehydratase</fullName>
    </alternativeName>
</protein>
<reference key="1">
    <citation type="submission" date="2008-08" db="EMBL/GenBank/DDBJ databases">
        <title>Complete sequence of Anaeromyxobacter sp. K.</title>
        <authorList>
            <consortium name="US DOE Joint Genome Institute"/>
            <person name="Lucas S."/>
            <person name="Copeland A."/>
            <person name="Lapidus A."/>
            <person name="Glavina del Rio T."/>
            <person name="Dalin E."/>
            <person name="Tice H."/>
            <person name="Bruce D."/>
            <person name="Goodwin L."/>
            <person name="Pitluck S."/>
            <person name="Saunders E."/>
            <person name="Brettin T."/>
            <person name="Detter J.C."/>
            <person name="Han C."/>
            <person name="Larimer F."/>
            <person name="Land M."/>
            <person name="Hauser L."/>
            <person name="Kyrpides N."/>
            <person name="Ovchinnikiva G."/>
            <person name="Beliaev A."/>
        </authorList>
    </citation>
    <scope>NUCLEOTIDE SEQUENCE [LARGE SCALE GENOMIC DNA]</scope>
    <source>
        <strain>K</strain>
    </source>
</reference>
<gene>
    <name evidence="1" type="primary">fabZ</name>
    <name type="ordered locus">AnaeK_1143</name>
</gene>
<accession>B4UGV1</accession>
<name>FABZ_ANASK</name>
<proteinExistence type="inferred from homology"/>
<feature type="chain" id="PRO_1000197271" description="3-hydroxyacyl-[acyl-carrier-protein] dehydratase FabZ">
    <location>
        <begin position="1"/>
        <end position="156"/>
    </location>
</feature>
<feature type="active site" evidence="1">
    <location>
        <position position="57"/>
    </location>
</feature>
<dbReference type="EC" id="4.2.1.59" evidence="1"/>
<dbReference type="EMBL" id="CP001131">
    <property type="protein sequence ID" value="ACG72376.1"/>
    <property type="molecule type" value="Genomic_DNA"/>
</dbReference>
<dbReference type="RefSeq" id="WP_012525202.1">
    <property type="nucleotide sequence ID" value="NC_011145.1"/>
</dbReference>
<dbReference type="SMR" id="B4UGV1"/>
<dbReference type="KEGG" id="ank:AnaeK_1143"/>
<dbReference type="HOGENOM" id="CLU_078912_3_0_7"/>
<dbReference type="OrthoDB" id="9772788at2"/>
<dbReference type="Proteomes" id="UP000001871">
    <property type="component" value="Chromosome"/>
</dbReference>
<dbReference type="GO" id="GO:0005737">
    <property type="term" value="C:cytoplasm"/>
    <property type="evidence" value="ECO:0007669"/>
    <property type="project" value="UniProtKB-SubCell"/>
</dbReference>
<dbReference type="GO" id="GO:0016020">
    <property type="term" value="C:membrane"/>
    <property type="evidence" value="ECO:0007669"/>
    <property type="project" value="GOC"/>
</dbReference>
<dbReference type="GO" id="GO:0019171">
    <property type="term" value="F:(3R)-hydroxyacyl-[acyl-carrier-protein] dehydratase activity"/>
    <property type="evidence" value="ECO:0007669"/>
    <property type="project" value="UniProtKB-EC"/>
</dbReference>
<dbReference type="GO" id="GO:0006633">
    <property type="term" value="P:fatty acid biosynthetic process"/>
    <property type="evidence" value="ECO:0007669"/>
    <property type="project" value="UniProtKB-UniRule"/>
</dbReference>
<dbReference type="GO" id="GO:0009245">
    <property type="term" value="P:lipid A biosynthetic process"/>
    <property type="evidence" value="ECO:0007669"/>
    <property type="project" value="UniProtKB-UniRule"/>
</dbReference>
<dbReference type="CDD" id="cd01288">
    <property type="entry name" value="FabZ"/>
    <property type="match status" value="1"/>
</dbReference>
<dbReference type="FunFam" id="3.10.129.10:FF:000001">
    <property type="entry name" value="3-hydroxyacyl-[acyl-carrier-protein] dehydratase FabZ"/>
    <property type="match status" value="1"/>
</dbReference>
<dbReference type="Gene3D" id="3.10.129.10">
    <property type="entry name" value="Hotdog Thioesterase"/>
    <property type="match status" value="1"/>
</dbReference>
<dbReference type="HAMAP" id="MF_00406">
    <property type="entry name" value="FabZ"/>
    <property type="match status" value="1"/>
</dbReference>
<dbReference type="InterPro" id="IPR013114">
    <property type="entry name" value="FabA_FabZ"/>
</dbReference>
<dbReference type="InterPro" id="IPR010084">
    <property type="entry name" value="FabZ"/>
</dbReference>
<dbReference type="InterPro" id="IPR029069">
    <property type="entry name" value="HotDog_dom_sf"/>
</dbReference>
<dbReference type="NCBIfam" id="TIGR01750">
    <property type="entry name" value="fabZ"/>
    <property type="match status" value="1"/>
</dbReference>
<dbReference type="NCBIfam" id="NF000582">
    <property type="entry name" value="PRK00006.1"/>
    <property type="match status" value="1"/>
</dbReference>
<dbReference type="PANTHER" id="PTHR30272">
    <property type="entry name" value="3-HYDROXYACYL-[ACYL-CARRIER-PROTEIN] DEHYDRATASE"/>
    <property type="match status" value="1"/>
</dbReference>
<dbReference type="PANTHER" id="PTHR30272:SF1">
    <property type="entry name" value="3-HYDROXYACYL-[ACYL-CARRIER-PROTEIN] DEHYDRATASE"/>
    <property type="match status" value="1"/>
</dbReference>
<dbReference type="Pfam" id="PF07977">
    <property type="entry name" value="FabA"/>
    <property type="match status" value="1"/>
</dbReference>
<dbReference type="SUPFAM" id="SSF54637">
    <property type="entry name" value="Thioesterase/thiol ester dehydrase-isomerase"/>
    <property type="match status" value="1"/>
</dbReference>
<keyword id="KW-0963">Cytoplasm</keyword>
<keyword id="KW-0441">Lipid A biosynthesis</keyword>
<keyword id="KW-0444">Lipid biosynthesis</keyword>
<keyword id="KW-0443">Lipid metabolism</keyword>
<keyword id="KW-0456">Lyase</keyword>
<sequence>MSETAERKPILDVVGIQKLLPHRPPFLLVDRVVEFEPNKRVVALKGVTMNEPFFQGHFPAQPVMPGVLILEALAQAAALLATLSMKPEEVNDKITYLMGIDAARFRRPVVPGDRLELEVEVTKQKGAVWKQTGVARVDGQVVAEAEFMAMLADRER</sequence>
<organism>
    <name type="scientific">Anaeromyxobacter sp. (strain K)</name>
    <dbReference type="NCBI Taxonomy" id="447217"/>
    <lineage>
        <taxon>Bacteria</taxon>
        <taxon>Pseudomonadati</taxon>
        <taxon>Myxococcota</taxon>
        <taxon>Myxococcia</taxon>
        <taxon>Myxococcales</taxon>
        <taxon>Cystobacterineae</taxon>
        <taxon>Anaeromyxobacteraceae</taxon>
        <taxon>Anaeromyxobacter</taxon>
    </lineage>
</organism>
<evidence type="ECO:0000255" key="1">
    <source>
        <dbReference type="HAMAP-Rule" id="MF_00406"/>
    </source>
</evidence>